<accession>Q8I912</accession>
<evidence type="ECO:0000250" key="1"/>
<evidence type="ECO:0000250" key="2">
    <source>
        <dbReference type="UniProtKB" id="A0A0D4WTV1"/>
    </source>
</evidence>
<evidence type="ECO:0000250" key="3">
    <source>
        <dbReference type="UniProtKB" id="A0A0D4WV12"/>
    </source>
</evidence>
<evidence type="ECO:0000250" key="4">
    <source>
        <dbReference type="UniProtKB" id="P0CE80"/>
    </source>
</evidence>
<evidence type="ECO:0000250" key="5">
    <source>
        <dbReference type="UniProtKB" id="Q4ZFU2"/>
    </source>
</evidence>
<evidence type="ECO:0000250" key="6">
    <source>
        <dbReference type="UniProtKB" id="Q8I914"/>
    </source>
</evidence>
<evidence type="ECO:0000255" key="7"/>
<evidence type="ECO:0000269" key="8">
    <source>
    </source>
</evidence>
<evidence type="ECO:0000303" key="9">
    <source>
    </source>
</evidence>
<evidence type="ECO:0000305" key="10"/>
<evidence type="ECO:0000305" key="11">
    <source>
    </source>
</evidence>
<evidence type="ECO:0000305" key="12">
    <source>
    </source>
</evidence>
<protein>
    <recommendedName>
        <fullName>Dermonecrotic toxin LlSicTox-betaIA1</fullName>
        <ecNumber evidence="5">4.6.1.-</ecNumber>
    </recommendedName>
    <alternativeName>
        <fullName>LlH10</fullName>
        <shortName evidence="9">H10</shortName>
    </alternativeName>
    <alternativeName>
        <fullName>Phospholipase D</fullName>
        <shortName>PLD</shortName>
    </alternativeName>
    <alternativeName>
        <fullName evidence="9">SMase II</fullName>
    </alternativeName>
    <alternativeName>
        <fullName>Sphingomyelin phosphodiesterase D</fullName>
        <shortName>SMD</shortName>
        <shortName>SMase D</shortName>
        <shortName>Sphingomyelinase D</shortName>
    </alternativeName>
</protein>
<organism>
    <name type="scientific">Loxosceles laeta</name>
    <name type="common">South American recluse spider</name>
    <name type="synonym">Scytodes laeta</name>
    <dbReference type="NCBI Taxonomy" id="58217"/>
    <lineage>
        <taxon>Eukaryota</taxon>
        <taxon>Metazoa</taxon>
        <taxon>Ecdysozoa</taxon>
        <taxon>Arthropoda</taxon>
        <taxon>Chelicerata</taxon>
        <taxon>Arachnida</taxon>
        <taxon>Araneae</taxon>
        <taxon>Araneomorphae</taxon>
        <taxon>Haplogynae</taxon>
        <taxon>Scytodoidea</taxon>
        <taxon>Sicariidae</taxon>
        <taxon>Loxosceles</taxon>
    </lineage>
</organism>
<proteinExistence type="evidence at protein level"/>
<name>B1H_LOXLA</name>
<dbReference type="EC" id="4.6.1.-" evidence="5"/>
<dbReference type="EMBL" id="AY093601">
    <property type="protein sequence ID" value="AAM21156.1"/>
    <property type="molecule type" value="mRNA"/>
</dbReference>
<dbReference type="SMR" id="Q8I912"/>
<dbReference type="ArachnoServer" id="AS000126">
    <property type="toxin name" value="Sphingomyelinase D (LlSicTox-betaIA1)"/>
</dbReference>
<dbReference type="BRENDA" id="3.1.4.41">
    <property type="organism ID" value="6922"/>
</dbReference>
<dbReference type="GO" id="GO:0005576">
    <property type="term" value="C:extracellular region"/>
    <property type="evidence" value="ECO:0007669"/>
    <property type="project" value="UniProtKB-SubCell"/>
</dbReference>
<dbReference type="GO" id="GO:0016829">
    <property type="term" value="F:lyase activity"/>
    <property type="evidence" value="ECO:0007669"/>
    <property type="project" value="UniProtKB-KW"/>
</dbReference>
<dbReference type="GO" id="GO:0046872">
    <property type="term" value="F:metal ion binding"/>
    <property type="evidence" value="ECO:0007669"/>
    <property type="project" value="UniProtKB-KW"/>
</dbReference>
<dbReference type="GO" id="GO:0008081">
    <property type="term" value="F:phosphoric diester hydrolase activity"/>
    <property type="evidence" value="ECO:0007669"/>
    <property type="project" value="InterPro"/>
</dbReference>
<dbReference type="GO" id="GO:0090729">
    <property type="term" value="F:toxin activity"/>
    <property type="evidence" value="ECO:0007669"/>
    <property type="project" value="UniProtKB-KW"/>
</dbReference>
<dbReference type="GO" id="GO:0031640">
    <property type="term" value="P:killing of cells of another organism"/>
    <property type="evidence" value="ECO:0007669"/>
    <property type="project" value="UniProtKB-KW"/>
</dbReference>
<dbReference type="GO" id="GO:0016042">
    <property type="term" value="P:lipid catabolic process"/>
    <property type="evidence" value="ECO:0007669"/>
    <property type="project" value="UniProtKB-KW"/>
</dbReference>
<dbReference type="CDD" id="cd08576">
    <property type="entry name" value="GDPD_like_SMaseD_PLD"/>
    <property type="match status" value="1"/>
</dbReference>
<dbReference type="Gene3D" id="3.20.20.190">
    <property type="entry name" value="Phosphatidylinositol (PI) phosphodiesterase"/>
    <property type="match status" value="1"/>
</dbReference>
<dbReference type="InterPro" id="IPR017946">
    <property type="entry name" value="PLC-like_Pdiesterase_TIM-brl"/>
</dbReference>
<dbReference type="Pfam" id="PF13653">
    <property type="entry name" value="GDPD_2"/>
    <property type="match status" value="1"/>
</dbReference>
<dbReference type="SUPFAM" id="SSF51695">
    <property type="entry name" value="PLC-like phosphodiesterases"/>
    <property type="match status" value="1"/>
</dbReference>
<keyword id="KW-0204">Cytolysis</keyword>
<keyword id="KW-1061">Dermonecrotic toxin</keyword>
<keyword id="KW-1015">Disulfide bond</keyword>
<keyword id="KW-0354">Hemolysis</keyword>
<keyword id="KW-1199">Hemostasis impairing toxin</keyword>
<keyword id="KW-0442">Lipid degradation</keyword>
<keyword id="KW-0443">Lipid metabolism</keyword>
<keyword id="KW-0456">Lyase</keyword>
<keyword id="KW-0460">Magnesium</keyword>
<keyword id="KW-0479">Metal-binding</keyword>
<keyword id="KW-1202">Platelet aggregation activating toxin</keyword>
<keyword id="KW-0964">Secreted</keyword>
<keyword id="KW-0732">Signal</keyword>
<keyword id="KW-0800">Toxin</keyword>
<keyword id="KW-0865">Zymogen</keyword>
<feature type="signal peptide" evidence="7">
    <location>
        <begin position="1"/>
        <end position="21"/>
    </location>
</feature>
<feature type="propeptide" id="PRO_0000279574" evidence="1">
    <location>
        <begin position="22"/>
        <end position="26"/>
    </location>
</feature>
<feature type="chain" id="PRO_0000279575" description="Dermonecrotic toxin LlSicTox-betaIA1">
    <location>
        <begin position="27"/>
        <end position="304"/>
    </location>
</feature>
<feature type="active site" evidence="6">
    <location>
        <position position="38"/>
    </location>
</feature>
<feature type="active site" description="Nucleophile" evidence="6">
    <location>
        <position position="74"/>
    </location>
</feature>
<feature type="binding site" evidence="6">
    <location>
        <position position="58"/>
    </location>
    <ligand>
        <name>Mg(2+)</name>
        <dbReference type="ChEBI" id="CHEBI:18420"/>
    </ligand>
</feature>
<feature type="binding site" evidence="6">
    <location>
        <position position="60"/>
    </location>
    <ligand>
        <name>Mg(2+)</name>
        <dbReference type="ChEBI" id="CHEBI:18420"/>
    </ligand>
</feature>
<feature type="binding site" evidence="6">
    <location>
        <position position="118"/>
    </location>
    <ligand>
        <name>Mg(2+)</name>
        <dbReference type="ChEBI" id="CHEBI:18420"/>
    </ligand>
</feature>
<feature type="disulfide bond" evidence="4">
    <location>
        <begin position="78"/>
        <end position="84"/>
    </location>
</feature>
<feature type="disulfide bond" evidence="4">
    <location>
        <begin position="80"/>
        <end position="223"/>
    </location>
</feature>
<feature type="sequence conflict" description="In Ref. 2; no nucleotide entry." evidence="10" ref="2">
    <original>Y</original>
    <variation>I</variation>
    <location>
        <position position="205"/>
    </location>
</feature>
<sequence length="304" mass="34519">MLLSAVISFIGFAAFLQEANGHVVERADSRKPIWDIAHMVNDLDLVDEYLGDGANALEADLAFTSDGTADEMYHGVPCDCFRSCTRSEKFSTYMDYIRRITTPGSSNFRPQMLLLIIDLKLKGIEPNVAYAAGKSTAKKLLSSYWQDGKSGARAYIVLSLETITRQDFISGFKDAIDASGHTELYEKIGWDFSGNEDLGEIRRIYQKYGIDDHIWQGDGITNCWVRDDDRLKEAIKKKNDPNYKYTKKVYTWSIDKNASIRNALRLGVDAIMTNYPEDVKDILQESEFSGYLRMATYDDNPWVK</sequence>
<reference key="1">
    <citation type="journal article" date="2002" name="Biochem. Biophys. Res. Commun.">
        <title>Molecular cloning and expression of a functional dermonecrotic and haemolytic factor from Loxosceles laeta venom.</title>
        <authorList>
            <person name="Fernandes-Pedrosa M.F."/>
            <person name="Junqueira de Azevedo I.L.M."/>
            <person name="Goncalves-de-Andrade R.M."/>
            <person name="van den Berg C.W."/>
            <person name="Ramos C.R.R."/>
            <person name="Ho P.L."/>
            <person name="Tambourgi D.V."/>
        </authorList>
    </citation>
    <scope>NUCLEOTIDE SEQUENCE [MRNA]</scope>
    <source>
        <tissue>Venom gland</tissue>
    </source>
</reference>
<reference key="2">
    <citation type="journal article" date="2009" name="Toxicon">
        <title>SMase II, a new sphingomyelinase D from Loxosceles laeta venom gland: molecular cloning, expression, function and structural analysis.</title>
        <authorList>
            <person name="de Santi Ferrara G.I."/>
            <person name="Fernandes-Pedrosa Mde F."/>
            <person name="Junqueira de Azevedo I.L.M."/>
            <person name="Goncalves-de-Andrade R.M."/>
            <person name="Portaro F.C."/>
            <person name="Manzoni-de-Almeida D."/>
            <person name="Murakami M.T."/>
            <person name="Arni R.K."/>
            <person name="van den Berg C.W."/>
            <person name="Ho P.L."/>
            <person name="Tambourgi D.V."/>
        </authorList>
    </citation>
    <scope>NUCLEOTIDE SEQUENCE [MRNA]</scope>
    <scope>FUNCTION</scope>
    <scope>3D-STRUCTURE MODELING</scope>
    <scope>CATALYTIC ACTIVITY</scope>
</reference>
<comment type="function">
    <text evidence="2 4 8">Dermonecrotic toxins cleave the phosphodiester linkage between the phosphate and headgroup of certain phospholipids (sphingolipid and lysolipid substrates), forming an alcohol (often choline) and a cyclic phosphate (By similarity). This toxin acts on sphingomyelin (SM) with low activity (PubMed:19249326). It may also act on ceramide phosphoethanolamine (CPE), lysophosphatidylcholine (LPC) and lysophosphatidylethanolamine (LPE), but not on lysophosphatidylserine (LPS), and lysophosphatidylglycerol (LPG) (By similarity). It acts by transphosphatidylation, releasing exclusively cyclic phosphate products as second products (By similarity). Induces hemolysis, dermonecrosis, and edema (PubMed:19249326). Also induces platelet aggregation (By similarity).</text>
</comment>
<comment type="catalytic activity">
    <reaction evidence="12">
        <text>an N-(acyl)-sphingosylphosphocholine = an N-(acyl)-sphingosyl-1,3-cyclic phosphate + choline</text>
        <dbReference type="Rhea" id="RHEA:60652"/>
        <dbReference type="ChEBI" id="CHEBI:15354"/>
        <dbReference type="ChEBI" id="CHEBI:64583"/>
        <dbReference type="ChEBI" id="CHEBI:143892"/>
    </reaction>
</comment>
<comment type="catalytic activity">
    <reaction evidence="2">
        <text>an N-(acyl)-sphingosylphosphoethanolamine = an N-(acyl)-sphingosyl-1,3-cyclic phosphate + ethanolamine</text>
        <dbReference type="Rhea" id="RHEA:60648"/>
        <dbReference type="ChEBI" id="CHEBI:57603"/>
        <dbReference type="ChEBI" id="CHEBI:143891"/>
        <dbReference type="ChEBI" id="CHEBI:143892"/>
    </reaction>
</comment>
<comment type="catalytic activity">
    <reaction evidence="2">
        <text>a 1-acyl-sn-glycero-3-phosphocholine = a 1-acyl-sn-glycero-2,3-cyclic phosphate + choline</text>
        <dbReference type="Rhea" id="RHEA:60700"/>
        <dbReference type="ChEBI" id="CHEBI:15354"/>
        <dbReference type="ChEBI" id="CHEBI:58168"/>
        <dbReference type="ChEBI" id="CHEBI:143947"/>
    </reaction>
</comment>
<comment type="catalytic activity">
    <reaction evidence="2">
        <text>a 1-acyl-sn-glycero-3-phosphoethanolamine = a 1-acyl-sn-glycero-2,3-cyclic phosphate + ethanolamine</text>
        <dbReference type="Rhea" id="RHEA:60704"/>
        <dbReference type="ChEBI" id="CHEBI:57603"/>
        <dbReference type="ChEBI" id="CHEBI:64381"/>
        <dbReference type="ChEBI" id="CHEBI:143947"/>
    </reaction>
</comment>
<comment type="cofactor">
    <cofactor evidence="6">
        <name>Mg(2+)</name>
        <dbReference type="ChEBI" id="CHEBI:18420"/>
    </cofactor>
    <text evidence="6">Binds 1 Mg(2+) ion per subunit.</text>
</comment>
<comment type="subcellular location">
    <subcellularLocation>
        <location evidence="11">Secreted</location>
    </subcellularLocation>
</comment>
<comment type="tissue specificity">
    <text evidence="11">Expressed by the venom gland.</text>
</comment>
<comment type="similarity">
    <text evidence="10">Belongs to the arthropod phospholipase D family. Class II subfamily. Class IIb sub-subfamily.</text>
</comment>
<comment type="caution">
    <text evidence="2 3 5">The most common activity assay for dermonecrotic toxins detects enzymatic activity by monitoring choline release from substrate. Liberation of choline from sphingomyelin (SM) or lysophosphatidylcholine (LPC) is commonly assumed to result from substrate hydrolysis, giving either ceramide-1-phosphate (C1P) or lysophosphatidic acid (LPA), respectively, as a second product. However, two studies from Lajoie and colleagues (2013 and 2015) report the observation of exclusive formation of cyclic phosphate products as second products, resulting from intramolecular transphosphatidylation. Cyclic phosphates have vastly different biological properties from their monoester counterparts, and they may be relevant to the pathology of brown spider envenomation.</text>
</comment>